<evidence type="ECO:0000255" key="1">
    <source>
        <dbReference type="HAMAP-Rule" id="MF_01007"/>
    </source>
</evidence>
<protein>
    <recommendedName>
        <fullName evidence="1">Ribosomal RNA small subunit methyltransferase H</fullName>
        <ecNumber evidence="1">2.1.1.199</ecNumber>
    </recommendedName>
    <alternativeName>
        <fullName evidence="1">16S rRNA m(4)C1402 methyltransferase</fullName>
    </alternativeName>
    <alternativeName>
        <fullName evidence="1">rRNA (cytosine-N(4)-)-methyltransferase RsmH</fullName>
    </alternativeName>
</protein>
<gene>
    <name evidence="1" type="primary">rsmH</name>
    <name type="synonym">mraW</name>
    <name type="ordered locus">EC55989_0078</name>
</gene>
<feature type="chain" id="PRO_0000386867" description="Ribosomal RNA small subunit methyltransferase H">
    <location>
        <begin position="1"/>
        <end position="313"/>
    </location>
</feature>
<feature type="binding site" evidence="1">
    <location>
        <begin position="35"/>
        <end position="37"/>
    </location>
    <ligand>
        <name>S-adenosyl-L-methionine</name>
        <dbReference type="ChEBI" id="CHEBI:59789"/>
    </ligand>
</feature>
<feature type="binding site" evidence="1">
    <location>
        <position position="55"/>
    </location>
    <ligand>
        <name>S-adenosyl-L-methionine</name>
        <dbReference type="ChEBI" id="CHEBI:59789"/>
    </ligand>
</feature>
<feature type="binding site" evidence="1">
    <location>
        <position position="79"/>
    </location>
    <ligand>
        <name>S-adenosyl-L-methionine</name>
        <dbReference type="ChEBI" id="CHEBI:59789"/>
    </ligand>
</feature>
<feature type="binding site" evidence="1">
    <location>
        <position position="101"/>
    </location>
    <ligand>
        <name>S-adenosyl-L-methionine</name>
        <dbReference type="ChEBI" id="CHEBI:59789"/>
    </ligand>
</feature>
<feature type="binding site" evidence="1">
    <location>
        <position position="108"/>
    </location>
    <ligand>
        <name>S-adenosyl-L-methionine</name>
        <dbReference type="ChEBI" id="CHEBI:59789"/>
    </ligand>
</feature>
<accession>B7LFV2</accession>
<organism>
    <name type="scientific">Escherichia coli (strain 55989 / EAEC)</name>
    <dbReference type="NCBI Taxonomy" id="585055"/>
    <lineage>
        <taxon>Bacteria</taxon>
        <taxon>Pseudomonadati</taxon>
        <taxon>Pseudomonadota</taxon>
        <taxon>Gammaproteobacteria</taxon>
        <taxon>Enterobacterales</taxon>
        <taxon>Enterobacteriaceae</taxon>
        <taxon>Escherichia</taxon>
    </lineage>
</organism>
<comment type="function">
    <text evidence="1">Specifically methylates the N4 position of cytidine in position 1402 (C1402) of 16S rRNA.</text>
</comment>
<comment type="catalytic activity">
    <reaction evidence="1">
        <text>cytidine(1402) in 16S rRNA + S-adenosyl-L-methionine = N(4)-methylcytidine(1402) in 16S rRNA + S-adenosyl-L-homocysteine + H(+)</text>
        <dbReference type="Rhea" id="RHEA:42928"/>
        <dbReference type="Rhea" id="RHEA-COMP:10286"/>
        <dbReference type="Rhea" id="RHEA-COMP:10287"/>
        <dbReference type="ChEBI" id="CHEBI:15378"/>
        <dbReference type="ChEBI" id="CHEBI:57856"/>
        <dbReference type="ChEBI" id="CHEBI:59789"/>
        <dbReference type="ChEBI" id="CHEBI:74506"/>
        <dbReference type="ChEBI" id="CHEBI:82748"/>
        <dbReference type="EC" id="2.1.1.199"/>
    </reaction>
</comment>
<comment type="subcellular location">
    <subcellularLocation>
        <location evidence="1">Cytoplasm</location>
    </subcellularLocation>
</comment>
<comment type="similarity">
    <text evidence="1">Belongs to the methyltransferase superfamily. RsmH family.</text>
</comment>
<name>RSMH_ECO55</name>
<dbReference type="EC" id="2.1.1.199" evidence="1"/>
<dbReference type="EMBL" id="CU928145">
    <property type="protein sequence ID" value="CAU95966.1"/>
    <property type="molecule type" value="Genomic_DNA"/>
</dbReference>
<dbReference type="RefSeq" id="WP_000970479.1">
    <property type="nucleotide sequence ID" value="NZ_CP028304.1"/>
</dbReference>
<dbReference type="SMR" id="B7LFV2"/>
<dbReference type="GeneID" id="86862592"/>
<dbReference type="KEGG" id="eck:EC55989_0078"/>
<dbReference type="HOGENOM" id="CLU_038422_2_0_6"/>
<dbReference type="Proteomes" id="UP000000746">
    <property type="component" value="Chromosome"/>
</dbReference>
<dbReference type="GO" id="GO:0005737">
    <property type="term" value="C:cytoplasm"/>
    <property type="evidence" value="ECO:0007669"/>
    <property type="project" value="UniProtKB-SubCell"/>
</dbReference>
<dbReference type="GO" id="GO:0071424">
    <property type="term" value="F:rRNA (cytosine-N4-)-methyltransferase activity"/>
    <property type="evidence" value="ECO:0007669"/>
    <property type="project" value="UniProtKB-UniRule"/>
</dbReference>
<dbReference type="GO" id="GO:0070475">
    <property type="term" value="P:rRNA base methylation"/>
    <property type="evidence" value="ECO:0007669"/>
    <property type="project" value="UniProtKB-UniRule"/>
</dbReference>
<dbReference type="FunFam" id="1.10.150.170:FF:000001">
    <property type="entry name" value="Ribosomal RNA small subunit methyltransferase H"/>
    <property type="match status" value="1"/>
</dbReference>
<dbReference type="Gene3D" id="1.10.150.170">
    <property type="entry name" value="Putative methyltransferase TM0872, insert domain"/>
    <property type="match status" value="1"/>
</dbReference>
<dbReference type="Gene3D" id="3.40.50.150">
    <property type="entry name" value="Vaccinia Virus protein VP39"/>
    <property type="match status" value="1"/>
</dbReference>
<dbReference type="HAMAP" id="MF_01007">
    <property type="entry name" value="16SrRNA_methyltr_H"/>
    <property type="match status" value="1"/>
</dbReference>
<dbReference type="InterPro" id="IPR002903">
    <property type="entry name" value="RsmH"/>
</dbReference>
<dbReference type="InterPro" id="IPR023397">
    <property type="entry name" value="SAM-dep_MeTrfase_MraW_recog"/>
</dbReference>
<dbReference type="InterPro" id="IPR029063">
    <property type="entry name" value="SAM-dependent_MTases_sf"/>
</dbReference>
<dbReference type="NCBIfam" id="TIGR00006">
    <property type="entry name" value="16S rRNA (cytosine(1402)-N(4))-methyltransferase RsmH"/>
    <property type="match status" value="1"/>
</dbReference>
<dbReference type="PANTHER" id="PTHR11265:SF0">
    <property type="entry name" value="12S RRNA N4-METHYLCYTIDINE METHYLTRANSFERASE"/>
    <property type="match status" value="1"/>
</dbReference>
<dbReference type="PANTHER" id="PTHR11265">
    <property type="entry name" value="S-ADENOSYL-METHYLTRANSFERASE MRAW"/>
    <property type="match status" value="1"/>
</dbReference>
<dbReference type="Pfam" id="PF01795">
    <property type="entry name" value="Methyltransf_5"/>
    <property type="match status" value="1"/>
</dbReference>
<dbReference type="PIRSF" id="PIRSF004486">
    <property type="entry name" value="MraW"/>
    <property type="match status" value="1"/>
</dbReference>
<dbReference type="SUPFAM" id="SSF81799">
    <property type="entry name" value="Putative methyltransferase TM0872, insert domain"/>
    <property type="match status" value="1"/>
</dbReference>
<dbReference type="SUPFAM" id="SSF53335">
    <property type="entry name" value="S-adenosyl-L-methionine-dependent methyltransferases"/>
    <property type="match status" value="1"/>
</dbReference>
<keyword id="KW-0963">Cytoplasm</keyword>
<keyword id="KW-0489">Methyltransferase</keyword>
<keyword id="KW-1185">Reference proteome</keyword>
<keyword id="KW-0698">rRNA processing</keyword>
<keyword id="KW-0949">S-adenosyl-L-methionine</keyword>
<keyword id="KW-0808">Transferase</keyword>
<reference key="1">
    <citation type="journal article" date="2009" name="PLoS Genet.">
        <title>Organised genome dynamics in the Escherichia coli species results in highly diverse adaptive paths.</title>
        <authorList>
            <person name="Touchon M."/>
            <person name="Hoede C."/>
            <person name="Tenaillon O."/>
            <person name="Barbe V."/>
            <person name="Baeriswyl S."/>
            <person name="Bidet P."/>
            <person name="Bingen E."/>
            <person name="Bonacorsi S."/>
            <person name="Bouchier C."/>
            <person name="Bouvet O."/>
            <person name="Calteau A."/>
            <person name="Chiapello H."/>
            <person name="Clermont O."/>
            <person name="Cruveiller S."/>
            <person name="Danchin A."/>
            <person name="Diard M."/>
            <person name="Dossat C."/>
            <person name="Karoui M.E."/>
            <person name="Frapy E."/>
            <person name="Garry L."/>
            <person name="Ghigo J.M."/>
            <person name="Gilles A.M."/>
            <person name="Johnson J."/>
            <person name="Le Bouguenec C."/>
            <person name="Lescat M."/>
            <person name="Mangenot S."/>
            <person name="Martinez-Jehanne V."/>
            <person name="Matic I."/>
            <person name="Nassif X."/>
            <person name="Oztas S."/>
            <person name="Petit M.A."/>
            <person name="Pichon C."/>
            <person name="Rouy Z."/>
            <person name="Ruf C.S."/>
            <person name="Schneider D."/>
            <person name="Tourret J."/>
            <person name="Vacherie B."/>
            <person name="Vallenet D."/>
            <person name="Medigue C."/>
            <person name="Rocha E.P.C."/>
            <person name="Denamur E."/>
        </authorList>
    </citation>
    <scope>NUCLEOTIDE SEQUENCE [LARGE SCALE GENOMIC DNA]</scope>
    <source>
        <strain>55989 / EAEC</strain>
    </source>
</reference>
<sequence length="313" mass="34878">MMENYKHTTVLLDEAVNGLNIRPDGIYIDGTFGRGGHSRLILSQLGEEGRLLAIDRDPQAIAVAKTIDDPRFSIIHGPFSALGEYVAERDLIGKIDGILLDLGVSSPQLDDAERGFSFMRDGPLDMRMDPTRGQSAAEWLQTAEEADIAWVLKTYGEERFAKRIARAIVERNREQPMTRTKELAEVVAAATPVKDKFKHPATRTFQAVRIWVNSELEEIEQALKSSLNVLAPGGRLSIISFHSLEDRIVKRFMRENSRGPQVPAGLPMTEEQLKKLGGRQLRALGKLMPGEEEVAENPRARSSVLRIAERTNA</sequence>
<proteinExistence type="inferred from homology"/>